<name>METK_COLP3</name>
<proteinExistence type="inferred from homology"/>
<gene>
    <name evidence="1" type="primary">metK</name>
    <name type="ordered locus">CPS_1256</name>
</gene>
<keyword id="KW-0067">ATP-binding</keyword>
<keyword id="KW-0963">Cytoplasm</keyword>
<keyword id="KW-0460">Magnesium</keyword>
<keyword id="KW-0479">Metal-binding</keyword>
<keyword id="KW-0547">Nucleotide-binding</keyword>
<keyword id="KW-0554">One-carbon metabolism</keyword>
<keyword id="KW-0630">Potassium</keyword>
<keyword id="KW-0808">Transferase</keyword>
<accession>Q486L6</accession>
<feature type="chain" id="PRO_0000240988" description="S-adenosylmethionine synthase">
    <location>
        <begin position="1"/>
        <end position="395"/>
    </location>
</feature>
<feature type="region of interest" description="Flexible loop" evidence="1">
    <location>
        <begin position="99"/>
        <end position="109"/>
    </location>
</feature>
<feature type="binding site" description="in other chain" evidence="1">
    <location>
        <position position="15"/>
    </location>
    <ligand>
        <name>ATP</name>
        <dbReference type="ChEBI" id="CHEBI:30616"/>
        <note>ligand shared between two neighboring subunits</note>
    </ligand>
</feature>
<feature type="binding site" evidence="1">
    <location>
        <position position="17"/>
    </location>
    <ligand>
        <name>Mg(2+)</name>
        <dbReference type="ChEBI" id="CHEBI:18420"/>
    </ligand>
</feature>
<feature type="binding site" evidence="1">
    <location>
        <position position="43"/>
    </location>
    <ligand>
        <name>K(+)</name>
        <dbReference type="ChEBI" id="CHEBI:29103"/>
    </ligand>
</feature>
<feature type="binding site" description="in other chain" evidence="1">
    <location>
        <position position="56"/>
    </location>
    <ligand>
        <name>L-methionine</name>
        <dbReference type="ChEBI" id="CHEBI:57844"/>
        <note>ligand shared between two neighboring subunits</note>
    </ligand>
</feature>
<feature type="binding site" description="in other chain" evidence="1">
    <location>
        <position position="99"/>
    </location>
    <ligand>
        <name>L-methionine</name>
        <dbReference type="ChEBI" id="CHEBI:57844"/>
        <note>ligand shared between two neighboring subunits</note>
    </ligand>
</feature>
<feature type="binding site" description="in other chain" evidence="1">
    <location>
        <begin position="164"/>
        <end position="166"/>
    </location>
    <ligand>
        <name>ATP</name>
        <dbReference type="ChEBI" id="CHEBI:30616"/>
        <note>ligand shared between two neighboring subunits</note>
    </ligand>
</feature>
<feature type="binding site" description="in other chain" evidence="1">
    <location>
        <begin position="230"/>
        <end position="231"/>
    </location>
    <ligand>
        <name>ATP</name>
        <dbReference type="ChEBI" id="CHEBI:30616"/>
        <note>ligand shared between two neighboring subunits</note>
    </ligand>
</feature>
<feature type="binding site" evidence="1">
    <location>
        <position position="239"/>
    </location>
    <ligand>
        <name>ATP</name>
        <dbReference type="ChEBI" id="CHEBI:30616"/>
        <note>ligand shared between two neighboring subunits</note>
    </ligand>
</feature>
<feature type="binding site" evidence="1">
    <location>
        <position position="239"/>
    </location>
    <ligand>
        <name>L-methionine</name>
        <dbReference type="ChEBI" id="CHEBI:57844"/>
        <note>ligand shared between two neighboring subunits</note>
    </ligand>
</feature>
<feature type="binding site" description="in other chain" evidence="1">
    <location>
        <begin position="245"/>
        <end position="246"/>
    </location>
    <ligand>
        <name>ATP</name>
        <dbReference type="ChEBI" id="CHEBI:30616"/>
        <note>ligand shared between two neighboring subunits</note>
    </ligand>
</feature>
<feature type="binding site" evidence="1">
    <location>
        <position position="262"/>
    </location>
    <ligand>
        <name>ATP</name>
        <dbReference type="ChEBI" id="CHEBI:30616"/>
        <note>ligand shared between two neighboring subunits</note>
    </ligand>
</feature>
<feature type="binding site" evidence="1">
    <location>
        <position position="266"/>
    </location>
    <ligand>
        <name>ATP</name>
        <dbReference type="ChEBI" id="CHEBI:30616"/>
        <note>ligand shared between two neighboring subunits</note>
    </ligand>
</feature>
<feature type="binding site" description="in other chain" evidence="1">
    <location>
        <position position="270"/>
    </location>
    <ligand>
        <name>L-methionine</name>
        <dbReference type="ChEBI" id="CHEBI:57844"/>
        <note>ligand shared between two neighboring subunits</note>
    </ligand>
</feature>
<reference key="1">
    <citation type="journal article" date="2005" name="Proc. Natl. Acad. Sci. U.S.A.">
        <title>The psychrophilic lifestyle as revealed by the genome sequence of Colwellia psychrerythraea 34H through genomic and proteomic analyses.</title>
        <authorList>
            <person name="Methe B.A."/>
            <person name="Nelson K.E."/>
            <person name="Deming J.W."/>
            <person name="Momen B."/>
            <person name="Melamud E."/>
            <person name="Zhang X."/>
            <person name="Moult J."/>
            <person name="Madupu R."/>
            <person name="Nelson W.C."/>
            <person name="Dodson R.J."/>
            <person name="Brinkac L.M."/>
            <person name="Daugherty S.C."/>
            <person name="Durkin A.S."/>
            <person name="DeBoy R.T."/>
            <person name="Kolonay J.F."/>
            <person name="Sullivan S.A."/>
            <person name="Zhou L."/>
            <person name="Davidsen T.M."/>
            <person name="Wu M."/>
            <person name="Huston A.L."/>
            <person name="Lewis M."/>
            <person name="Weaver B."/>
            <person name="Weidman J.F."/>
            <person name="Khouri H."/>
            <person name="Utterback T.R."/>
            <person name="Feldblyum T.V."/>
            <person name="Fraser C.M."/>
        </authorList>
    </citation>
    <scope>NUCLEOTIDE SEQUENCE [LARGE SCALE GENOMIC DNA]</scope>
    <source>
        <strain>34H / ATCC BAA-681</strain>
    </source>
</reference>
<sequence>MSRHFFTSESVSEGHPDKIADQISDAVLDAIIAKDKHARVACETMVKTGVAIISGEVSTNAWVDLEKLTRNVISDIGYTSSDVGFDGATCGIMNLIGQQSPEIAQGVDRSNPEEQGAGDQGLMFGYATNETPTLMPAPLYYSHRLVERQAEARKSGVLPWLRPDAKSQVTFIYEDNKPVAIDTVVLSTQHNPDIKQEDLVSAVMENIINHVLPAELLTEDTKYHINPTGRFVIGGPVGDCGLTGRKIIVDTYGGMARHGGGAFSGKDPSKVDRSAAYAGRYVAKNIVAAGLADRCEIQISYAIGVAEPTSISIDTFGTGSISEERLVEIVREHFDLRPYGITKMLDLLHPMYQQTAAYGHFGREPFEMTVGDDTFTAFSWEKTDKADDLRKAAGL</sequence>
<evidence type="ECO:0000255" key="1">
    <source>
        <dbReference type="HAMAP-Rule" id="MF_00086"/>
    </source>
</evidence>
<dbReference type="EC" id="2.5.1.6" evidence="1"/>
<dbReference type="EMBL" id="CP000083">
    <property type="protein sequence ID" value="AAZ27084.1"/>
    <property type="molecule type" value="Genomic_DNA"/>
</dbReference>
<dbReference type="RefSeq" id="WP_011042093.1">
    <property type="nucleotide sequence ID" value="NC_003910.7"/>
</dbReference>
<dbReference type="SMR" id="Q486L6"/>
<dbReference type="STRING" id="167879.CPS_1256"/>
<dbReference type="KEGG" id="cps:CPS_1256"/>
<dbReference type="eggNOG" id="COG0192">
    <property type="taxonomic scope" value="Bacteria"/>
</dbReference>
<dbReference type="HOGENOM" id="CLU_041802_1_1_6"/>
<dbReference type="UniPathway" id="UPA00315">
    <property type="reaction ID" value="UER00080"/>
</dbReference>
<dbReference type="Proteomes" id="UP000000547">
    <property type="component" value="Chromosome"/>
</dbReference>
<dbReference type="GO" id="GO:0005737">
    <property type="term" value="C:cytoplasm"/>
    <property type="evidence" value="ECO:0007669"/>
    <property type="project" value="UniProtKB-SubCell"/>
</dbReference>
<dbReference type="GO" id="GO:0005524">
    <property type="term" value="F:ATP binding"/>
    <property type="evidence" value="ECO:0007669"/>
    <property type="project" value="UniProtKB-UniRule"/>
</dbReference>
<dbReference type="GO" id="GO:0000287">
    <property type="term" value="F:magnesium ion binding"/>
    <property type="evidence" value="ECO:0007669"/>
    <property type="project" value="UniProtKB-UniRule"/>
</dbReference>
<dbReference type="GO" id="GO:0004478">
    <property type="term" value="F:methionine adenosyltransferase activity"/>
    <property type="evidence" value="ECO:0007669"/>
    <property type="project" value="UniProtKB-UniRule"/>
</dbReference>
<dbReference type="GO" id="GO:0006730">
    <property type="term" value="P:one-carbon metabolic process"/>
    <property type="evidence" value="ECO:0007669"/>
    <property type="project" value="UniProtKB-KW"/>
</dbReference>
<dbReference type="GO" id="GO:0006556">
    <property type="term" value="P:S-adenosylmethionine biosynthetic process"/>
    <property type="evidence" value="ECO:0007669"/>
    <property type="project" value="UniProtKB-UniRule"/>
</dbReference>
<dbReference type="CDD" id="cd18079">
    <property type="entry name" value="S-AdoMet_synt"/>
    <property type="match status" value="1"/>
</dbReference>
<dbReference type="FunFam" id="3.30.300.10:FF:000003">
    <property type="entry name" value="S-adenosylmethionine synthase"/>
    <property type="match status" value="1"/>
</dbReference>
<dbReference type="Gene3D" id="3.30.300.10">
    <property type="match status" value="3"/>
</dbReference>
<dbReference type="HAMAP" id="MF_00086">
    <property type="entry name" value="S_AdoMet_synth1"/>
    <property type="match status" value="1"/>
</dbReference>
<dbReference type="InterPro" id="IPR022631">
    <property type="entry name" value="ADOMET_SYNTHASE_CS"/>
</dbReference>
<dbReference type="InterPro" id="IPR022630">
    <property type="entry name" value="S-AdoMet_synt_C"/>
</dbReference>
<dbReference type="InterPro" id="IPR022629">
    <property type="entry name" value="S-AdoMet_synt_central"/>
</dbReference>
<dbReference type="InterPro" id="IPR022628">
    <property type="entry name" value="S-AdoMet_synt_N"/>
</dbReference>
<dbReference type="InterPro" id="IPR002133">
    <property type="entry name" value="S-AdoMet_synthetase"/>
</dbReference>
<dbReference type="InterPro" id="IPR022636">
    <property type="entry name" value="S-AdoMet_synthetase_sfam"/>
</dbReference>
<dbReference type="NCBIfam" id="TIGR01034">
    <property type="entry name" value="metK"/>
    <property type="match status" value="1"/>
</dbReference>
<dbReference type="PANTHER" id="PTHR11964">
    <property type="entry name" value="S-ADENOSYLMETHIONINE SYNTHETASE"/>
    <property type="match status" value="1"/>
</dbReference>
<dbReference type="Pfam" id="PF02773">
    <property type="entry name" value="S-AdoMet_synt_C"/>
    <property type="match status" value="1"/>
</dbReference>
<dbReference type="Pfam" id="PF02772">
    <property type="entry name" value="S-AdoMet_synt_M"/>
    <property type="match status" value="1"/>
</dbReference>
<dbReference type="Pfam" id="PF00438">
    <property type="entry name" value="S-AdoMet_synt_N"/>
    <property type="match status" value="1"/>
</dbReference>
<dbReference type="PIRSF" id="PIRSF000497">
    <property type="entry name" value="MAT"/>
    <property type="match status" value="1"/>
</dbReference>
<dbReference type="SUPFAM" id="SSF55973">
    <property type="entry name" value="S-adenosylmethionine synthetase"/>
    <property type="match status" value="3"/>
</dbReference>
<dbReference type="PROSITE" id="PS00376">
    <property type="entry name" value="ADOMET_SYNTHASE_1"/>
    <property type="match status" value="1"/>
</dbReference>
<dbReference type="PROSITE" id="PS00377">
    <property type="entry name" value="ADOMET_SYNTHASE_2"/>
    <property type="match status" value="1"/>
</dbReference>
<comment type="function">
    <text evidence="1">Catalyzes the formation of S-adenosylmethionine (AdoMet) from methionine and ATP. The overall synthetic reaction is composed of two sequential steps, AdoMet formation and the subsequent tripolyphosphate hydrolysis which occurs prior to release of AdoMet from the enzyme.</text>
</comment>
<comment type="catalytic activity">
    <reaction evidence="1">
        <text>L-methionine + ATP + H2O = S-adenosyl-L-methionine + phosphate + diphosphate</text>
        <dbReference type="Rhea" id="RHEA:21080"/>
        <dbReference type="ChEBI" id="CHEBI:15377"/>
        <dbReference type="ChEBI" id="CHEBI:30616"/>
        <dbReference type="ChEBI" id="CHEBI:33019"/>
        <dbReference type="ChEBI" id="CHEBI:43474"/>
        <dbReference type="ChEBI" id="CHEBI:57844"/>
        <dbReference type="ChEBI" id="CHEBI:59789"/>
        <dbReference type="EC" id="2.5.1.6"/>
    </reaction>
</comment>
<comment type="cofactor">
    <cofactor evidence="1">
        <name>Mg(2+)</name>
        <dbReference type="ChEBI" id="CHEBI:18420"/>
    </cofactor>
    <text evidence="1">Binds 2 divalent ions per subunit.</text>
</comment>
<comment type="cofactor">
    <cofactor evidence="1">
        <name>K(+)</name>
        <dbReference type="ChEBI" id="CHEBI:29103"/>
    </cofactor>
    <text evidence="1">Binds 1 potassium ion per subunit.</text>
</comment>
<comment type="pathway">
    <text evidence="1">Amino-acid biosynthesis; S-adenosyl-L-methionine biosynthesis; S-adenosyl-L-methionine from L-methionine: step 1/1.</text>
</comment>
<comment type="subunit">
    <text evidence="1">Homotetramer; dimer of dimers.</text>
</comment>
<comment type="subcellular location">
    <subcellularLocation>
        <location evidence="1">Cytoplasm</location>
    </subcellularLocation>
</comment>
<comment type="similarity">
    <text evidence="1">Belongs to the AdoMet synthase family.</text>
</comment>
<organism>
    <name type="scientific">Colwellia psychrerythraea (strain 34H / ATCC BAA-681)</name>
    <name type="common">Vibrio psychroerythus</name>
    <dbReference type="NCBI Taxonomy" id="167879"/>
    <lineage>
        <taxon>Bacteria</taxon>
        <taxon>Pseudomonadati</taxon>
        <taxon>Pseudomonadota</taxon>
        <taxon>Gammaproteobacteria</taxon>
        <taxon>Alteromonadales</taxon>
        <taxon>Colwelliaceae</taxon>
        <taxon>Colwellia</taxon>
    </lineage>
</organism>
<protein>
    <recommendedName>
        <fullName evidence="1">S-adenosylmethionine synthase</fullName>
        <shortName evidence="1">AdoMet synthase</shortName>
        <ecNumber evidence="1">2.5.1.6</ecNumber>
    </recommendedName>
    <alternativeName>
        <fullName evidence="1">MAT</fullName>
    </alternativeName>
    <alternativeName>
        <fullName evidence="1">Methionine adenosyltransferase</fullName>
    </alternativeName>
</protein>